<reference key="1">
    <citation type="journal article" date="2008" name="PLoS ONE">
        <title>Genome biology of Actinobacillus pleuropneumoniae JL03, an isolate of serotype 3 prevalent in China.</title>
        <authorList>
            <person name="Xu Z."/>
            <person name="Zhou Y."/>
            <person name="Li L."/>
            <person name="Zhou R."/>
            <person name="Xiao S."/>
            <person name="Wan Y."/>
            <person name="Zhang S."/>
            <person name="Wang K."/>
            <person name="Li W."/>
            <person name="Li L."/>
            <person name="Jin H."/>
            <person name="Kang M."/>
            <person name="Dalai B."/>
            <person name="Li T."/>
            <person name="Liu L."/>
            <person name="Cheng Y."/>
            <person name="Zhang L."/>
            <person name="Xu T."/>
            <person name="Zheng H."/>
            <person name="Pu S."/>
            <person name="Wang B."/>
            <person name="Gu W."/>
            <person name="Zhang X.L."/>
            <person name="Zhu G.-F."/>
            <person name="Wang S."/>
            <person name="Zhao G.-P."/>
            <person name="Chen H."/>
        </authorList>
    </citation>
    <scope>NUCLEOTIDE SEQUENCE [LARGE SCALE GENOMIC DNA]</scope>
    <source>
        <strain>JL03</strain>
    </source>
</reference>
<gene>
    <name evidence="1" type="primary">rimM</name>
    <name type="ordered locus">APJL_1823</name>
</gene>
<feature type="chain" id="PRO_1000089486" description="Ribosome maturation factor RimM">
    <location>
        <begin position="1"/>
        <end position="175"/>
    </location>
</feature>
<feature type="domain" description="PRC barrel" evidence="1">
    <location>
        <begin position="95"/>
        <end position="175"/>
    </location>
</feature>
<accession>B0BSV9</accession>
<sequence>MSEQKIEVVGKLGSTYGIRGWLRLYSSTEETESIFDYQPWFLKIKGQWQPIELESWRYHNNDLIVKLKGSDDRESAQLLTNAEIGVDLSVFPELEEGDYYWHDLIGCQVINLEDYSMGVVTELMETGSNDVLVVRANSKDAFGKQERLIPFLYEQVVKRVDLATKTITVDWDAGF</sequence>
<proteinExistence type="inferred from homology"/>
<comment type="function">
    <text evidence="1">An accessory protein needed during the final step in the assembly of 30S ribosomal subunit, possibly for assembly of the head region. Essential for efficient processing of 16S rRNA. May be needed both before and after RbfA during the maturation of 16S rRNA. It has affinity for free ribosomal 30S subunits but not for 70S ribosomes.</text>
</comment>
<comment type="subunit">
    <text evidence="1">Binds ribosomal protein uS19.</text>
</comment>
<comment type="subcellular location">
    <subcellularLocation>
        <location evidence="1">Cytoplasm</location>
    </subcellularLocation>
</comment>
<comment type="domain">
    <text evidence="1">The PRC barrel domain binds ribosomal protein uS19.</text>
</comment>
<comment type="similarity">
    <text evidence="1">Belongs to the RimM family.</text>
</comment>
<keyword id="KW-0143">Chaperone</keyword>
<keyword id="KW-0963">Cytoplasm</keyword>
<keyword id="KW-0690">Ribosome biogenesis</keyword>
<keyword id="KW-0698">rRNA processing</keyword>
<organism>
    <name type="scientific">Actinobacillus pleuropneumoniae serotype 3 (strain JL03)</name>
    <dbReference type="NCBI Taxonomy" id="434271"/>
    <lineage>
        <taxon>Bacteria</taxon>
        <taxon>Pseudomonadati</taxon>
        <taxon>Pseudomonadota</taxon>
        <taxon>Gammaproteobacteria</taxon>
        <taxon>Pasteurellales</taxon>
        <taxon>Pasteurellaceae</taxon>
        <taxon>Actinobacillus</taxon>
    </lineage>
</organism>
<evidence type="ECO:0000255" key="1">
    <source>
        <dbReference type="HAMAP-Rule" id="MF_00014"/>
    </source>
</evidence>
<dbReference type="EMBL" id="CP000687">
    <property type="protein sequence ID" value="ABY70373.1"/>
    <property type="molecule type" value="Genomic_DNA"/>
</dbReference>
<dbReference type="RefSeq" id="WP_005599336.1">
    <property type="nucleotide sequence ID" value="NC_010278.1"/>
</dbReference>
<dbReference type="SMR" id="B0BSV9"/>
<dbReference type="GeneID" id="48600080"/>
<dbReference type="KEGG" id="apj:APJL_1823"/>
<dbReference type="HOGENOM" id="CLU_077636_1_0_6"/>
<dbReference type="Proteomes" id="UP000008547">
    <property type="component" value="Chromosome"/>
</dbReference>
<dbReference type="GO" id="GO:0005737">
    <property type="term" value="C:cytoplasm"/>
    <property type="evidence" value="ECO:0007669"/>
    <property type="project" value="UniProtKB-SubCell"/>
</dbReference>
<dbReference type="GO" id="GO:0005840">
    <property type="term" value="C:ribosome"/>
    <property type="evidence" value="ECO:0007669"/>
    <property type="project" value="InterPro"/>
</dbReference>
<dbReference type="GO" id="GO:0043022">
    <property type="term" value="F:ribosome binding"/>
    <property type="evidence" value="ECO:0007669"/>
    <property type="project" value="InterPro"/>
</dbReference>
<dbReference type="GO" id="GO:0042274">
    <property type="term" value="P:ribosomal small subunit biogenesis"/>
    <property type="evidence" value="ECO:0007669"/>
    <property type="project" value="UniProtKB-UniRule"/>
</dbReference>
<dbReference type="GO" id="GO:0006364">
    <property type="term" value="P:rRNA processing"/>
    <property type="evidence" value="ECO:0007669"/>
    <property type="project" value="UniProtKB-UniRule"/>
</dbReference>
<dbReference type="Gene3D" id="2.30.30.240">
    <property type="entry name" value="PRC-barrel domain"/>
    <property type="match status" value="1"/>
</dbReference>
<dbReference type="Gene3D" id="2.40.30.60">
    <property type="entry name" value="RimM"/>
    <property type="match status" value="1"/>
</dbReference>
<dbReference type="HAMAP" id="MF_00014">
    <property type="entry name" value="Ribosome_mat_RimM"/>
    <property type="match status" value="1"/>
</dbReference>
<dbReference type="InterPro" id="IPR011033">
    <property type="entry name" value="PRC_barrel-like_sf"/>
</dbReference>
<dbReference type="InterPro" id="IPR056792">
    <property type="entry name" value="PRC_RimM"/>
</dbReference>
<dbReference type="InterPro" id="IPR011961">
    <property type="entry name" value="RimM"/>
</dbReference>
<dbReference type="InterPro" id="IPR002676">
    <property type="entry name" value="RimM_N"/>
</dbReference>
<dbReference type="InterPro" id="IPR036976">
    <property type="entry name" value="RimM_N_sf"/>
</dbReference>
<dbReference type="InterPro" id="IPR009000">
    <property type="entry name" value="Transl_B-barrel_sf"/>
</dbReference>
<dbReference type="NCBIfam" id="TIGR02273">
    <property type="entry name" value="16S_RimM"/>
    <property type="match status" value="1"/>
</dbReference>
<dbReference type="PANTHER" id="PTHR33692">
    <property type="entry name" value="RIBOSOME MATURATION FACTOR RIMM"/>
    <property type="match status" value="1"/>
</dbReference>
<dbReference type="PANTHER" id="PTHR33692:SF1">
    <property type="entry name" value="RIBOSOME MATURATION FACTOR RIMM"/>
    <property type="match status" value="1"/>
</dbReference>
<dbReference type="Pfam" id="PF24986">
    <property type="entry name" value="PRC_RimM"/>
    <property type="match status" value="1"/>
</dbReference>
<dbReference type="Pfam" id="PF01782">
    <property type="entry name" value="RimM"/>
    <property type="match status" value="1"/>
</dbReference>
<dbReference type="SUPFAM" id="SSF50346">
    <property type="entry name" value="PRC-barrel domain"/>
    <property type="match status" value="1"/>
</dbReference>
<dbReference type="SUPFAM" id="SSF50447">
    <property type="entry name" value="Translation proteins"/>
    <property type="match status" value="1"/>
</dbReference>
<name>RIMM_ACTPJ</name>
<protein>
    <recommendedName>
        <fullName evidence="1">Ribosome maturation factor RimM</fullName>
    </recommendedName>
</protein>